<gene>
    <name evidence="1" type="primary">epmA</name>
    <name type="synonym">yjeA</name>
    <name type="ordered locus">YpsIP31758_3665</name>
</gene>
<accession>A7FMZ1</accession>
<name>EPMA_YERP3</name>
<sequence length="325" mass="36700">MSDTASWQPSAPIANLLKRAAIMAEIRRFFADRGVLEVETPTMSQATVTDIHLVPFETRFVGPGAADGLTLYMMTSPEYHMKRLLAAGSGPIYQLGRSFRNEEAGRYHNPEFTMLEWYRPHYDMYRLMNEVDDLLQQILDCNSAETLSYQQAFLRHLNIDPLSAEKAQLREVAAKLDLSNIADTEEDRDTLLQLLFTVGVEPYIGRDKPAFIYHFPASQASLAEISTEDHRVAERFEVYFKGIELANGFRELTDGDEQLQRFEQDNRNRAKRGLPQNPIDMNLIAALKQGLPDCSGVALGVDRLVMLALNAERLSDVIAFPVNIA</sequence>
<protein>
    <recommendedName>
        <fullName evidence="1">Elongation factor P--(R)-beta-lysine ligase</fullName>
        <shortName evidence="1">EF-P--(R)-beta-lysine ligase</shortName>
        <ecNumber evidence="1">6.3.2.-</ecNumber>
    </recommendedName>
    <alternativeName>
        <fullName evidence="1">EF-P post-translational modification enzyme A</fullName>
    </alternativeName>
    <alternativeName>
        <fullName evidence="1">EF-P-lysine lysyltransferase</fullName>
    </alternativeName>
</protein>
<proteinExistence type="inferred from homology"/>
<dbReference type="EC" id="6.3.2.-" evidence="1"/>
<dbReference type="EMBL" id="CP000720">
    <property type="protein sequence ID" value="ABS48580.1"/>
    <property type="molecule type" value="Genomic_DNA"/>
</dbReference>
<dbReference type="RefSeq" id="WP_002209139.1">
    <property type="nucleotide sequence ID" value="NC_009708.1"/>
</dbReference>
<dbReference type="SMR" id="A7FMZ1"/>
<dbReference type="GeneID" id="57974246"/>
<dbReference type="KEGG" id="ypi:YpsIP31758_3665"/>
<dbReference type="HOGENOM" id="CLU_008255_1_1_6"/>
<dbReference type="Proteomes" id="UP000002412">
    <property type="component" value="Chromosome"/>
</dbReference>
<dbReference type="GO" id="GO:0005829">
    <property type="term" value="C:cytosol"/>
    <property type="evidence" value="ECO:0007669"/>
    <property type="project" value="TreeGrafter"/>
</dbReference>
<dbReference type="GO" id="GO:0016880">
    <property type="term" value="F:acid-ammonia (or amide) ligase activity"/>
    <property type="evidence" value="ECO:0007669"/>
    <property type="project" value="UniProtKB-UniRule"/>
</dbReference>
<dbReference type="GO" id="GO:0005524">
    <property type="term" value="F:ATP binding"/>
    <property type="evidence" value="ECO:0007669"/>
    <property type="project" value="UniProtKB-UniRule"/>
</dbReference>
<dbReference type="GO" id="GO:0004824">
    <property type="term" value="F:lysine-tRNA ligase activity"/>
    <property type="evidence" value="ECO:0007669"/>
    <property type="project" value="InterPro"/>
</dbReference>
<dbReference type="GO" id="GO:0000049">
    <property type="term" value="F:tRNA binding"/>
    <property type="evidence" value="ECO:0007669"/>
    <property type="project" value="TreeGrafter"/>
</dbReference>
<dbReference type="GO" id="GO:0006430">
    <property type="term" value="P:lysyl-tRNA aminoacylation"/>
    <property type="evidence" value="ECO:0007669"/>
    <property type="project" value="InterPro"/>
</dbReference>
<dbReference type="FunFam" id="3.30.930.10:FF:000017">
    <property type="entry name" value="Elongation factor P--(R)-beta-lysine ligase"/>
    <property type="match status" value="1"/>
</dbReference>
<dbReference type="Gene3D" id="3.30.930.10">
    <property type="entry name" value="Bira Bifunctional Protein, Domain 2"/>
    <property type="match status" value="1"/>
</dbReference>
<dbReference type="HAMAP" id="MF_00174">
    <property type="entry name" value="EF_P_modif_A"/>
    <property type="match status" value="1"/>
</dbReference>
<dbReference type="InterPro" id="IPR004364">
    <property type="entry name" value="Aa-tRNA-synt_II"/>
</dbReference>
<dbReference type="InterPro" id="IPR006195">
    <property type="entry name" value="aa-tRNA-synth_II"/>
</dbReference>
<dbReference type="InterPro" id="IPR045864">
    <property type="entry name" value="aa-tRNA-synth_II/BPL/LPL"/>
</dbReference>
<dbReference type="InterPro" id="IPR004525">
    <property type="entry name" value="EpmA"/>
</dbReference>
<dbReference type="InterPro" id="IPR018149">
    <property type="entry name" value="Lys-tRNA-synth_II_C"/>
</dbReference>
<dbReference type="NCBIfam" id="TIGR00462">
    <property type="entry name" value="genX"/>
    <property type="match status" value="1"/>
</dbReference>
<dbReference type="NCBIfam" id="NF006828">
    <property type="entry name" value="PRK09350.1"/>
    <property type="match status" value="1"/>
</dbReference>
<dbReference type="PANTHER" id="PTHR42918:SF6">
    <property type="entry name" value="ELONGATION FACTOR P--(R)-BETA-LYSINE LIGASE"/>
    <property type="match status" value="1"/>
</dbReference>
<dbReference type="PANTHER" id="PTHR42918">
    <property type="entry name" value="LYSYL-TRNA SYNTHETASE"/>
    <property type="match status" value="1"/>
</dbReference>
<dbReference type="Pfam" id="PF00152">
    <property type="entry name" value="tRNA-synt_2"/>
    <property type="match status" value="1"/>
</dbReference>
<dbReference type="PRINTS" id="PR00982">
    <property type="entry name" value="TRNASYNTHLYS"/>
</dbReference>
<dbReference type="SUPFAM" id="SSF55681">
    <property type="entry name" value="Class II aaRS and biotin synthetases"/>
    <property type="match status" value="1"/>
</dbReference>
<dbReference type="PROSITE" id="PS50862">
    <property type="entry name" value="AA_TRNA_LIGASE_II"/>
    <property type="match status" value="1"/>
</dbReference>
<keyword id="KW-0067">ATP-binding</keyword>
<keyword id="KW-0436">Ligase</keyword>
<keyword id="KW-0547">Nucleotide-binding</keyword>
<feature type="chain" id="PRO_1000058330" description="Elongation factor P--(R)-beta-lysine ligase">
    <location>
        <begin position="1"/>
        <end position="325"/>
    </location>
</feature>
<feature type="binding site" evidence="1">
    <location>
        <begin position="76"/>
        <end position="78"/>
    </location>
    <ligand>
        <name>substrate</name>
    </ligand>
</feature>
<feature type="binding site" evidence="1">
    <location>
        <begin position="100"/>
        <end position="102"/>
    </location>
    <ligand>
        <name>ATP</name>
        <dbReference type="ChEBI" id="CHEBI:30616"/>
    </ligand>
</feature>
<feature type="binding site" evidence="1">
    <location>
        <position position="109"/>
    </location>
    <ligand>
        <name>ATP</name>
        <dbReference type="ChEBI" id="CHEBI:30616"/>
    </ligand>
</feature>
<feature type="binding site" evidence="1">
    <location>
        <position position="118"/>
    </location>
    <ligand>
        <name>substrate</name>
    </ligand>
</feature>
<feature type="binding site" evidence="1">
    <location>
        <begin position="244"/>
        <end position="245"/>
    </location>
    <ligand>
        <name>ATP</name>
        <dbReference type="ChEBI" id="CHEBI:30616"/>
    </ligand>
</feature>
<feature type="binding site" evidence="1">
    <location>
        <position position="251"/>
    </location>
    <ligand>
        <name>substrate</name>
    </ligand>
</feature>
<feature type="binding site" evidence="1">
    <location>
        <position position="300"/>
    </location>
    <ligand>
        <name>ATP</name>
        <dbReference type="ChEBI" id="CHEBI:30616"/>
    </ligand>
</feature>
<organism>
    <name type="scientific">Yersinia pseudotuberculosis serotype O:1b (strain IP 31758)</name>
    <dbReference type="NCBI Taxonomy" id="349747"/>
    <lineage>
        <taxon>Bacteria</taxon>
        <taxon>Pseudomonadati</taxon>
        <taxon>Pseudomonadota</taxon>
        <taxon>Gammaproteobacteria</taxon>
        <taxon>Enterobacterales</taxon>
        <taxon>Yersiniaceae</taxon>
        <taxon>Yersinia</taxon>
    </lineage>
</organism>
<comment type="function">
    <text evidence="1">With EpmB is involved in the beta-lysylation step of the post-translational modification of translation elongation factor P (EF-P). Catalyzes the ATP-dependent activation of (R)-beta-lysine produced by EpmB, forming a lysyl-adenylate, from which the beta-lysyl moiety is then transferred to the epsilon-amino group of a conserved specific lysine residue in EF-P.</text>
</comment>
<comment type="catalytic activity">
    <reaction evidence="1">
        <text>D-beta-lysine + L-lysyl-[protein] + ATP = N(6)-((3R)-3,6-diaminohexanoyl)-L-lysyl-[protein] + AMP + diphosphate + H(+)</text>
        <dbReference type="Rhea" id="RHEA:83435"/>
        <dbReference type="Rhea" id="RHEA-COMP:9752"/>
        <dbReference type="Rhea" id="RHEA-COMP:20131"/>
        <dbReference type="ChEBI" id="CHEBI:15378"/>
        <dbReference type="ChEBI" id="CHEBI:29969"/>
        <dbReference type="ChEBI" id="CHEBI:30616"/>
        <dbReference type="ChEBI" id="CHEBI:33019"/>
        <dbReference type="ChEBI" id="CHEBI:84138"/>
        <dbReference type="ChEBI" id="CHEBI:156053"/>
        <dbReference type="ChEBI" id="CHEBI:456215"/>
    </reaction>
    <physiologicalReaction direction="left-to-right" evidence="1">
        <dbReference type="Rhea" id="RHEA:83436"/>
    </physiologicalReaction>
</comment>
<comment type="subunit">
    <text evidence="1">Homodimer.</text>
</comment>
<comment type="similarity">
    <text evidence="1">Belongs to the class-II aminoacyl-tRNA synthetase family. EpmA subfamily.</text>
</comment>
<evidence type="ECO:0000255" key="1">
    <source>
        <dbReference type="HAMAP-Rule" id="MF_00174"/>
    </source>
</evidence>
<reference key="1">
    <citation type="journal article" date="2007" name="PLoS Genet.">
        <title>The complete genome sequence of Yersinia pseudotuberculosis IP31758, the causative agent of Far East scarlet-like fever.</title>
        <authorList>
            <person name="Eppinger M."/>
            <person name="Rosovitz M.J."/>
            <person name="Fricke W.F."/>
            <person name="Rasko D.A."/>
            <person name="Kokorina G."/>
            <person name="Fayolle C."/>
            <person name="Lindler L.E."/>
            <person name="Carniel E."/>
            <person name="Ravel J."/>
        </authorList>
    </citation>
    <scope>NUCLEOTIDE SEQUENCE [LARGE SCALE GENOMIC DNA]</scope>
    <source>
        <strain>IP 31758</strain>
    </source>
</reference>